<dbReference type="EMBL" id="CP000891">
    <property type="protein sequence ID" value="ABX49082.1"/>
    <property type="molecule type" value="Genomic_DNA"/>
</dbReference>
<dbReference type="RefSeq" id="WP_006086397.1">
    <property type="nucleotide sequence ID" value="NC_009997.1"/>
</dbReference>
<dbReference type="SMR" id="A9KYZ4"/>
<dbReference type="GeneID" id="11772114"/>
<dbReference type="KEGG" id="sbn:Sbal195_1911"/>
<dbReference type="HOGENOM" id="CLU_126929_6_0_6"/>
<dbReference type="Proteomes" id="UP000000770">
    <property type="component" value="Chromosome"/>
</dbReference>
<dbReference type="GO" id="GO:0016151">
    <property type="term" value="F:nickel cation binding"/>
    <property type="evidence" value="ECO:0007669"/>
    <property type="project" value="UniProtKB-UniRule"/>
</dbReference>
<dbReference type="GO" id="GO:0008270">
    <property type="term" value="F:zinc ion binding"/>
    <property type="evidence" value="ECO:0007669"/>
    <property type="project" value="UniProtKB-UniRule"/>
</dbReference>
<dbReference type="GO" id="GO:0051604">
    <property type="term" value="P:protein maturation"/>
    <property type="evidence" value="ECO:0007669"/>
    <property type="project" value="InterPro"/>
</dbReference>
<dbReference type="GO" id="GO:0036211">
    <property type="term" value="P:protein modification process"/>
    <property type="evidence" value="ECO:0007669"/>
    <property type="project" value="UniProtKB-UniRule"/>
</dbReference>
<dbReference type="Gene3D" id="3.30.2320.80">
    <property type="match status" value="1"/>
</dbReference>
<dbReference type="HAMAP" id="MF_00213">
    <property type="entry name" value="HypA_HybF"/>
    <property type="match status" value="1"/>
</dbReference>
<dbReference type="InterPro" id="IPR000688">
    <property type="entry name" value="HypA/HybF"/>
</dbReference>
<dbReference type="NCBIfam" id="TIGR00100">
    <property type="entry name" value="hypA"/>
    <property type="match status" value="1"/>
</dbReference>
<dbReference type="PANTHER" id="PTHR34535">
    <property type="entry name" value="HYDROGENASE MATURATION FACTOR HYPA"/>
    <property type="match status" value="1"/>
</dbReference>
<dbReference type="PANTHER" id="PTHR34535:SF3">
    <property type="entry name" value="HYDROGENASE MATURATION FACTOR HYPA"/>
    <property type="match status" value="1"/>
</dbReference>
<dbReference type="Pfam" id="PF01155">
    <property type="entry name" value="HypA"/>
    <property type="match status" value="1"/>
</dbReference>
<dbReference type="PIRSF" id="PIRSF004761">
    <property type="entry name" value="Hydrgn_mat_HypA"/>
    <property type="match status" value="1"/>
</dbReference>
<gene>
    <name evidence="1" type="primary">hypA</name>
    <name type="ordered locus">Sbal195_1911</name>
</gene>
<keyword id="KW-0479">Metal-binding</keyword>
<keyword id="KW-0533">Nickel</keyword>
<keyword id="KW-0862">Zinc</keyword>
<accession>A9KYZ4</accession>
<protein>
    <recommendedName>
        <fullName evidence="1">Hydrogenase maturation factor HypA</fullName>
    </recommendedName>
</protein>
<feature type="chain" id="PRO_1000078040" description="Hydrogenase maturation factor HypA">
    <location>
        <begin position="1"/>
        <end position="117"/>
    </location>
</feature>
<feature type="binding site" evidence="1">
    <location>
        <position position="2"/>
    </location>
    <ligand>
        <name>Ni(2+)</name>
        <dbReference type="ChEBI" id="CHEBI:49786"/>
    </ligand>
</feature>
<feature type="binding site" evidence="1">
    <location>
        <position position="73"/>
    </location>
    <ligand>
        <name>Zn(2+)</name>
        <dbReference type="ChEBI" id="CHEBI:29105"/>
    </ligand>
</feature>
<feature type="binding site" evidence="1">
    <location>
        <position position="76"/>
    </location>
    <ligand>
        <name>Zn(2+)</name>
        <dbReference type="ChEBI" id="CHEBI:29105"/>
    </ligand>
</feature>
<feature type="binding site" evidence="1">
    <location>
        <position position="89"/>
    </location>
    <ligand>
        <name>Zn(2+)</name>
        <dbReference type="ChEBI" id="CHEBI:29105"/>
    </ligand>
</feature>
<feature type="binding site" evidence="1">
    <location>
        <position position="92"/>
    </location>
    <ligand>
        <name>Zn(2+)</name>
        <dbReference type="ChEBI" id="CHEBI:29105"/>
    </ligand>
</feature>
<name>HYPA_SHEB9</name>
<reference key="1">
    <citation type="submission" date="2007-11" db="EMBL/GenBank/DDBJ databases">
        <title>Complete sequence of chromosome of Shewanella baltica OS195.</title>
        <authorList>
            <consortium name="US DOE Joint Genome Institute"/>
            <person name="Copeland A."/>
            <person name="Lucas S."/>
            <person name="Lapidus A."/>
            <person name="Barry K."/>
            <person name="Glavina del Rio T."/>
            <person name="Dalin E."/>
            <person name="Tice H."/>
            <person name="Pitluck S."/>
            <person name="Chain P."/>
            <person name="Malfatti S."/>
            <person name="Shin M."/>
            <person name="Vergez L."/>
            <person name="Schmutz J."/>
            <person name="Larimer F."/>
            <person name="Land M."/>
            <person name="Hauser L."/>
            <person name="Kyrpides N."/>
            <person name="Kim E."/>
            <person name="Brettar I."/>
            <person name="Rodrigues J."/>
            <person name="Konstantinidis K."/>
            <person name="Klappenbach J."/>
            <person name="Hofle M."/>
            <person name="Tiedje J."/>
            <person name="Richardson P."/>
        </authorList>
    </citation>
    <scope>NUCLEOTIDE SEQUENCE [LARGE SCALE GENOMIC DNA]</scope>
    <source>
        <strain>OS195</strain>
    </source>
</reference>
<organism>
    <name type="scientific">Shewanella baltica (strain OS195)</name>
    <dbReference type="NCBI Taxonomy" id="399599"/>
    <lineage>
        <taxon>Bacteria</taxon>
        <taxon>Pseudomonadati</taxon>
        <taxon>Pseudomonadota</taxon>
        <taxon>Gammaproteobacteria</taxon>
        <taxon>Alteromonadales</taxon>
        <taxon>Shewanellaceae</taxon>
        <taxon>Shewanella</taxon>
    </lineage>
</organism>
<sequence>MHEYSIVSALIEQCEQHAQANHADKITRVDIKLGVMSGVEPSLLQTAFDTFKLDGICNAAQLNIQIQPLVILCQDCQTESVLSERTVVCPACQSFRTRVLDGEDMLLMQLEMEQNED</sequence>
<proteinExistence type="inferred from homology"/>
<comment type="function">
    <text evidence="1">Involved in the maturation of [NiFe] hydrogenases. Required for nickel insertion into the metal center of the hydrogenase.</text>
</comment>
<comment type="similarity">
    <text evidence="1">Belongs to the HypA/HybF family.</text>
</comment>
<evidence type="ECO:0000255" key="1">
    <source>
        <dbReference type="HAMAP-Rule" id="MF_00213"/>
    </source>
</evidence>